<protein>
    <recommendedName>
        <fullName evidence="1">ATP-dependent zinc metalloprotease FtsH</fullName>
        <ecNumber evidence="1">3.4.24.-</ecNumber>
    </recommendedName>
    <alternativeName>
        <fullName>Cell division protease FtsH</fullName>
    </alternativeName>
</protein>
<proteinExistence type="evidence at protein level"/>
<sequence>MAKNLILWLVIAVVLMSVFQSFGPSESNGRKVDYSTFLQEVNNDQVREARINGREINVTKKDSNRYTTYIPVQDPKLLDNLLTKNVKVVGEPPEEPSLLASIFISWFPMLLLIGVWIFFMRQMQGGGGKGAMSFGKSKARMLTEDQIKTTFADVAGCDEAKEEVAELVEYLREPSRFQKLGGKIPKGVLMVGPPGTGKTLLAKAIAGEAKVPFFTISGSDFVEMFVGVGASRVRDMFEQAKKAAPCIIFIDEIDAVGRQRGAGLGGGHDEREQTLNQMLVEMDGFEGNEGIIVIAATNRPDVLDPALLRPGRFDRQVVVGLPDVRGREQILKVHMRRVPLAPDIDAAIIARGTPGFSGADLANLVNEAALFAARGNKRVVSMVEFEKAKDKIMMGAERRSMVMTEAQKESTAYHEAGHAIIGRLVPEHDPVHKVTIIPRGRALGVTFFLPEGDAISASRQKLESQISTLYGGRLAEEIIYGPEHVSTGASNDIKVATNLARNMVTQWGFSEKLGPLLYAEEEGEVFLGRSVAKAKHMSDETARIIDQEVKALIERNYNRARQLLTDNMDILHAMKDALMKYETIDAPQIDDLMARRDVRPPAGWEEPGASNNSGDNGSPKAPRPVDEPRTPNPGNTMSEQLGDK</sequence>
<feature type="chain" id="PRO_0000084631" description="ATP-dependent zinc metalloprotease FtsH">
    <location>
        <begin position="1"/>
        <end position="644"/>
    </location>
</feature>
<feature type="topological domain" description="Cytoplasmic" evidence="19">
    <location>
        <begin position="1"/>
        <end position="4"/>
    </location>
</feature>
<feature type="transmembrane region" description="Helical" evidence="16">
    <location>
        <begin position="5"/>
        <end position="25"/>
    </location>
</feature>
<feature type="topological domain" description="Periplasmic" evidence="19">
    <location>
        <begin position="26"/>
        <end position="98"/>
    </location>
</feature>
<feature type="transmembrane region" description="Helical" evidence="16">
    <location>
        <begin position="99"/>
        <end position="119"/>
    </location>
</feature>
<feature type="topological domain" description="Cytoplasmic" evidence="7 19">
    <location>
        <begin position="120"/>
        <end position="644"/>
    </location>
</feature>
<feature type="region of interest" description="Disordered" evidence="2">
    <location>
        <begin position="598"/>
        <end position="644"/>
    </location>
</feature>
<feature type="compositionally biased region" description="Polar residues" evidence="2">
    <location>
        <begin position="632"/>
        <end position="644"/>
    </location>
</feature>
<feature type="active site" evidence="16">
    <location>
        <position position="415"/>
    </location>
</feature>
<feature type="binding site" evidence="1">
    <location>
        <begin position="192"/>
        <end position="199"/>
    </location>
    <ligand>
        <name>ATP</name>
        <dbReference type="ChEBI" id="CHEBI:30616"/>
    </ligand>
</feature>
<feature type="binding site" evidence="16">
    <location>
        <position position="414"/>
    </location>
    <ligand>
        <name>Zn(2+)</name>
        <dbReference type="ChEBI" id="CHEBI:29105"/>
        <note>catalytic</note>
    </ligand>
</feature>
<feature type="binding site" evidence="16">
    <location>
        <position position="418"/>
    </location>
    <ligand>
        <name>Zn(2+)</name>
        <dbReference type="ChEBI" id="CHEBI:29105"/>
        <note>catalytic</note>
    </ligand>
</feature>
<feature type="binding site" evidence="1">
    <location>
        <position position="492"/>
    </location>
    <ligand>
        <name>Zn(2+)</name>
        <dbReference type="ChEBI" id="CHEBI:29105"/>
        <note>catalytic</note>
    </ligand>
</feature>
<feature type="site" description="Substrate binding" evidence="16">
    <location>
        <position position="225"/>
    </location>
</feature>
<feature type="mutagenesis site" description="No in vivo protease activity, no in vitro ATPase activity." evidence="4">
    <original>L</original>
    <variation>N</variation>
    <location>
        <position position="201"/>
    </location>
</feature>
<feature type="mutagenesis site" description="Does not complement ftsH1 at 42 degrees Celsius, no protease activity in vivo." evidence="6">
    <original>F</original>
    <variation>A</variation>
    <variation>D</variation>
    <variation>E</variation>
    <variation>G</variation>
    <variation>N</variation>
    <variation>Q</variation>
    <variation>R</variation>
    <variation>S</variation>
    <variation>T</variation>
    <location>
        <position position="225"/>
    </location>
</feature>
<feature type="mutagenesis site" description="Partially complements ftsH1 at 42 degrees Celsius, some protease activity in vivo." evidence="6">
    <original>F</original>
    <variation>C</variation>
    <variation>H</variation>
    <location>
        <position position="225"/>
    </location>
</feature>
<feature type="mutagenesis site" description="Complements ftsH1 at 42 degrees Celsius, restores protease activity in vivo." evidence="6">
    <original>F</original>
    <variation>I</variation>
    <variation>L</variation>
    <variation>M</variation>
    <variation>V</variation>
    <variation>W</variation>
    <variation>Y</variation>
    <location>
        <position position="225"/>
    </location>
</feature>
<feature type="mutagenesis site" description="Does not complement ftsH1 at 42 degrees Celsius, no protease activity in vivo." evidence="6">
    <original>G</original>
    <variation>A</variation>
    <location>
        <position position="227"/>
    </location>
</feature>
<feature type="mutagenesis site" description="Low protease activity in vivo, low ATPase activity in vitro, complements ftsH1 at 42 degrees Celsius." evidence="4">
    <original>T</original>
    <variation>A</variation>
    <location>
        <position position="297"/>
    </location>
</feature>
<feature type="mutagenesis site" description="No in vivo protease activity." evidence="4">
    <original>N</original>
    <variation>A</variation>
    <location>
        <position position="298"/>
    </location>
</feature>
<feature type="mutagenesis site" description="No in vivo protease activity, no in vitro ATPase activity; probably still binds ATP." evidence="4">
    <original>D</original>
    <variation>A</variation>
    <variation>N</variation>
    <location>
        <position position="304"/>
    </location>
</feature>
<feature type="mutagenesis site" description="Low protease activity in vivo, low ATPase activity in vitro, complements ftsH1 at 42 degrees Celsius." evidence="4">
    <original>D</original>
    <variation>E</variation>
    <location>
        <position position="304"/>
    </location>
</feature>
<feature type="mutagenesis site" description="Low protease activity in vivo." evidence="4">
    <original>L</original>
    <variation>A</variation>
    <location>
        <position position="307"/>
    </location>
</feature>
<feature type="mutagenesis site" description="No in vivo protease activity, no ATPase activity in vitro; probably still binds ATP." evidence="4">
    <original>R</original>
    <variation>A</variation>
    <variation>L</variation>
    <variation>K</variation>
    <location>
        <position position="309"/>
    </location>
</feature>
<feature type="mutagenesis site" description="No in vivo protease activity, no ATPase activity in vitro; probably still binds ATP." evidence="4">
    <original>R</original>
    <variation>A</variation>
    <variation>L</variation>
    <variation>K</variation>
    <location>
        <position position="312"/>
    </location>
</feature>
<feature type="mutagenesis site" description="Loss of protease function.">
    <original>HEAGH</original>
    <variation>KEAGK</variation>
    <location>
        <begin position="414"/>
        <end position="418"/>
    </location>
</feature>
<feature type="mutagenesis site" description="Loss of protease function." evidence="5">
    <original>H</original>
    <variation>Y</variation>
    <location>
        <position position="414"/>
    </location>
</feature>
<feature type="mutagenesis site" description="Loss of protease activity in vivo." evidence="4">
    <original>E</original>
    <variation>Q</variation>
    <location>
        <position position="415"/>
    </location>
</feature>
<feature type="mutagenesis site" description="In tolZ21; loss of protease function in vivo, retains about 25% ATPase activity, temperature sensitive." evidence="4 5">
    <original>H</original>
    <variation>Y</variation>
    <location>
        <position position="418"/>
    </location>
</feature>
<feature type="mutagenesis site" description="In ftsH1; a temperature-sensitive mutant which increases the frequency of lysogenization of phage lambda; when associated with A-587." evidence="11">
    <original>E</original>
    <variation>K</variation>
    <location>
        <position position="463"/>
    </location>
</feature>
<feature type="mutagenesis site" description="Severe loss of protease function that is restored by excess Zn." evidence="5">
    <original>E</original>
    <variation>D</variation>
    <variation>K</variation>
    <variation>V</variation>
    <location>
        <position position="476"/>
    </location>
</feature>
<feature type="mutagenesis site" description="Little effect on protease function." evidence="5">
    <original>E</original>
    <variation>Q</variation>
    <location>
        <position position="476"/>
    </location>
</feature>
<feature type="mutagenesis site" description="In hflB29; increases the frequency of lysogenization of phage lambda." evidence="11">
    <original>H</original>
    <variation>R</variation>
    <location>
        <position position="536"/>
    </location>
</feature>
<feature type="mutagenesis site" description="No effect on protease function." evidence="5">
    <original>E</original>
    <variation>D</variation>
    <variation>K</variation>
    <variation>Q</variation>
    <location>
        <position position="582"/>
    </location>
</feature>
<feature type="mutagenesis site" description="Decreased protease function." evidence="5">
    <original>E</original>
    <variation>V</variation>
    <location>
        <position position="582"/>
    </location>
</feature>
<feature type="helix" evidence="21">
    <location>
        <begin position="34"/>
        <end position="42"/>
    </location>
</feature>
<feature type="strand" evidence="21">
    <location>
        <begin position="46"/>
        <end position="52"/>
    </location>
</feature>
<feature type="strand" evidence="21">
    <location>
        <begin position="55"/>
        <end position="60"/>
    </location>
</feature>
<feature type="strand" evidence="21">
    <location>
        <begin position="65"/>
        <end position="69"/>
    </location>
</feature>
<feature type="helix" evidence="21">
    <location>
        <begin position="77"/>
        <end position="83"/>
    </location>
</feature>
<feature type="strand" evidence="21">
    <location>
        <begin position="87"/>
        <end position="90"/>
    </location>
</feature>
<feature type="strand" evidence="20">
    <location>
        <begin position="142"/>
        <end position="144"/>
    </location>
</feature>
<feature type="helix" evidence="20">
    <location>
        <begin position="151"/>
        <end position="153"/>
    </location>
</feature>
<feature type="helix" evidence="20">
    <location>
        <begin position="158"/>
        <end position="163"/>
    </location>
</feature>
<feature type="helix" evidence="20">
    <location>
        <begin position="165"/>
        <end position="172"/>
    </location>
</feature>
<feature type="helix" evidence="20">
    <location>
        <begin position="174"/>
        <end position="176"/>
    </location>
</feature>
<feature type="strand" evidence="20">
    <location>
        <begin position="187"/>
        <end position="191"/>
    </location>
</feature>
<feature type="helix" evidence="20">
    <location>
        <begin position="198"/>
        <end position="209"/>
    </location>
</feature>
<feature type="strand" evidence="20">
    <location>
        <begin position="213"/>
        <end position="216"/>
    </location>
</feature>
<feature type="helix" evidence="20">
    <location>
        <begin position="230"/>
        <end position="241"/>
    </location>
</feature>
<feature type="strand" evidence="20">
    <location>
        <begin position="245"/>
        <end position="250"/>
    </location>
</feature>
<feature type="helix" evidence="20">
    <location>
        <begin position="253"/>
        <end position="256"/>
    </location>
</feature>
<feature type="helix" evidence="20">
    <location>
        <begin position="270"/>
        <end position="283"/>
    </location>
</feature>
<feature type="strand" evidence="20">
    <location>
        <begin position="287"/>
        <end position="289"/>
    </location>
</feature>
<feature type="strand" evidence="20">
    <location>
        <begin position="291"/>
        <end position="298"/>
    </location>
</feature>
<feature type="turn" evidence="20">
    <location>
        <begin position="300"/>
        <end position="302"/>
    </location>
</feature>
<feature type="helix" evidence="20">
    <location>
        <begin position="305"/>
        <end position="308"/>
    </location>
</feature>
<feature type="turn" evidence="22">
    <location>
        <begin position="310"/>
        <end position="312"/>
    </location>
</feature>
<feature type="strand" evidence="20">
    <location>
        <begin position="315"/>
        <end position="318"/>
    </location>
</feature>
<feature type="helix" evidence="20">
    <location>
        <begin position="324"/>
        <end position="335"/>
    </location>
</feature>
<feature type="helix" evidence="20">
    <location>
        <begin position="346"/>
        <end position="351"/>
    </location>
</feature>
<feature type="helix" evidence="20">
    <location>
        <begin position="358"/>
        <end position="374"/>
    </location>
</feature>
<feature type="strand" evidence="20">
    <location>
        <begin position="378"/>
        <end position="380"/>
    </location>
</feature>
<feature type="helix" evidence="20">
    <location>
        <begin position="382"/>
        <end position="392"/>
    </location>
</feature>
<feature type="helix" evidence="22">
    <location>
        <begin position="405"/>
        <end position="415"/>
    </location>
</feature>
<feature type="helix" evidence="22">
    <location>
        <begin position="420"/>
        <end position="422"/>
    </location>
</feature>
<feature type="strand" evidence="22">
    <location>
        <begin position="423"/>
        <end position="427"/>
    </location>
</feature>
<feature type="strand" evidence="22">
    <location>
        <begin position="431"/>
        <end position="435"/>
    </location>
</feature>
<feature type="strand" evidence="22">
    <location>
        <begin position="445"/>
        <end position="448"/>
    </location>
</feature>
<feature type="helix" evidence="22">
    <location>
        <begin position="459"/>
        <end position="480"/>
    </location>
</feature>
<feature type="strand" evidence="22">
    <location>
        <begin position="482"/>
        <end position="484"/>
    </location>
</feature>
<feature type="helix" evidence="22">
    <location>
        <begin position="490"/>
        <end position="506"/>
    </location>
</feature>
<feature type="turn" evidence="22">
    <location>
        <begin position="511"/>
        <end position="513"/>
    </location>
</feature>
<feature type="helix" evidence="22">
    <location>
        <begin position="539"/>
        <end position="566"/>
    </location>
</feature>
<feature type="helix" evidence="22">
    <location>
        <begin position="568"/>
        <end position="580"/>
    </location>
</feature>
<feature type="strand" evidence="22">
    <location>
        <begin position="581"/>
        <end position="584"/>
    </location>
</feature>
<feature type="helix" evidence="22">
    <location>
        <begin position="586"/>
        <end position="593"/>
    </location>
</feature>
<gene>
    <name evidence="1" type="primary">ftsH</name>
    <name type="synonym">hflB</name>
    <name type="synonym">mrsC</name>
    <name type="synonym">std</name>
    <name type="synonym">tolZ</name>
    <name type="ordered locus">b3178</name>
    <name type="ordered locus">JW3145</name>
</gene>
<keyword id="KW-0002">3D-structure</keyword>
<keyword id="KW-0067">ATP-binding</keyword>
<keyword id="KW-0997">Cell inner membrane</keyword>
<keyword id="KW-1003">Cell membrane</keyword>
<keyword id="KW-0378">Hydrolase</keyword>
<keyword id="KW-0472">Membrane</keyword>
<keyword id="KW-0479">Metal-binding</keyword>
<keyword id="KW-0482">Metalloprotease</keyword>
<keyword id="KW-0547">Nucleotide-binding</keyword>
<keyword id="KW-0645">Protease</keyword>
<keyword id="KW-1185">Reference proteome</keyword>
<keyword id="KW-0812">Transmembrane</keyword>
<keyword id="KW-1133">Transmembrane helix</keyword>
<keyword id="KW-0862">Zinc</keyword>
<accession>P0AAI3</accession>
<accession>P28691</accession>
<accession>Q2M934</accession>
<comment type="function">
    <text>Acts as a processive, ATP-dependent zinc metallopeptidase for both cytoplasmic and membrane proteins. Plays a role in the quality control of integral membrane proteins. Degrades a few membrane proteins that have not been assembled into complexes such as SecY, F(0) ATPase subunit a and YccA, and also cytoplasmic proteins sigma-32, LpxC, KdtA and phage lambda cII protein among others. Degrades membrane proteins in a processive manner starting at either the N- or C-terminus; recognition requires a cytoplasmic tail of about 20 residues with no apparent sequence requirements. It presumably dislocates membrane-spanning and periplasmic segments of the protein into the cytoplasm to degrade them, this probably requires ATP. Degrades C-terminal-tagged cytoplasmic proteins which are tagged with an 11-amino-acid nonpolar destabilizing tail via a mechanism involving the 10SA (SsrA) stable RNA.</text>
</comment>
<comment type="function">
    <text evidence="9">As FtsH regulates the levels of both LpxC and KdtA it is required for synthesis of both the protein and lipid components of lipopolysaccharide (LPS).</text>
</comment>
<comment type="function">
    <text evidence="10">(Microbial infection) Probably transports the toxic C-terminal region of CdiA from E.coli strain 536, E.cloacae strain ATCC 13047 and of Y.pestis strain A across the inner membrane to the cytoplasm, where CdiA has a toxic effect. Toxin transport is strain-specific, mutations in this gene do not confer resistance to several other tested CdiA toxins.</text>
</comment>
<comment type="cofactor">
    <cofactor>
        <name>Zn(2+)</name>
        <dbReference type="ChEBI" id="CHEBI:29105"/>
    </cofactor>
    <text>Binds 1 zinc ion per subunit.</text>
</comment>
<comment type="activity regulation">
    <text evidence="14">(Microbial infection) Activity against phage lambda cII protein is inhibited by EDTA but not by PMSF. In vitro pre-incubation of FtsH with HflKC abolishes its activity against phage lambda cII protein at the cytoplasmic side of the membrane.</text>
</comment>
<comment type="subunit">
    <text evidence="8 13 14 15">The E.coli AAA domain has been modeled as a homohexamer, in Thermus thermophilus the same domain crystallizes as a homohexamer. Forms a complex with HflKC (formerly called HflA); complex formation is stimulated by ATP. Interacts with YccA, and probably weakly with QmcA. Can be cross-linked to YidC (OxaA) and to a nascent polypeptide chain for an integral membrane protein.</text>
</comment>
<comment type="interaction">
    <interactant intactId="EBI-548381">
        <id>P0AAI3</id>
    </interactant>
    <interactant intactId="EBI-551642">
        <id>P0ABC3</id>
        <label>hflC</label>
    </interactant>
    <organismsDiffer>false</organismsDiffer>
    <experiments>9</experiments>
</comment>
<comment type="interaction">
    <interactant intactId="EBI-548381">
        <id>P0AAI3</id>
    </interactant>
    <interactant intactId="EBI-558599">
        <id>P0ABC7</id>
        <label>hflK</label>
    </interactant>
    <organismsDiffer>false</organismsDiffer>
    <experiments>7</experiments>
</comment>
<comment type="interaction">
    <interactant intactId="EBI-548381">
        <id>P0AAI3</id>
    </interactant>
    <interactant intactId="EBI-555342">
        <id>P0AGB3</id>
        <label>rpoH</label>
    </interactant>
    <organismsDiffer>false</organismsDiffer>
    <experiments>4</experiments>
</comment>
<comment type="interaction">
    <interactant intactId="EBI-548381">
        <id>P0AAI3</id>
    </interactant>
    <interactant intactId="EBI-4478343">
        <id>P03042</id>
        <label>cII</label>
    </interactant>
    <organismsDiffer>true</organismsDiffer>
    <experiments>5</experiments>
</comment>
<comment type="subcellular location">
    <subcellularLocation>
        <location evidence="1 7 12 13">Cell inner membrane</location>
        <topology evidence="1 7 12 13">Multi-pass membrane protein</topology>
    </subcellularLocation>
</comment>
<comment type="disruption phenotype">
    <text evidence="3 10">Lethality, due to increased levels of LpxC, which increases the level of LPS in the cell and results in formation of abnormal membrane structures in the periplasm. Lethality is suppressed under conditions in which LPS synthesis is reduced (PubMed:10048027). Disruption confers resistance to cellular contact-dependent growth inhibition (CDI) CdiA of E.coli strain 536, E.cloacae strain ATCC 13047 and of Y.pestis strain A, but not to CdiA from E.coli strain 93 toxin (PubMed:26305955).</text>
</comment>
<comment type="miscellaneous">
    <text evidence="18">The ftsH gene was discovered independently through 3 different phenotypes and received 3 different names: ftsH, for filamentous temperature-sensitive; tolZ, for colicin tolerance, and hlfB, because mutants show a high frequency of lysogenization when infected with phage lambda.</text>
</comment>
<comment type="miscellaneous">
    <text>Requires ATP for protease catalytic activity, probably due to tight coupling of the 2 activities; ADP or non-hydrolyzable analogs cannot substitute, except when unfolded, non-physiological substrates are tested.</text>
</comment>
<comment type="similarity">
    <text evidence="1">In the central section; belongs to the AAA ATPase family.</text>
</comment>
<comment type="similarity">
    <text evidence="1">In the C-terminal section; belongs to the peptidase M41 family.</text>
</comment>
<comment type="caution">
    <text evidence="17">Glu-476 was identified as the third Zn ligand (PubMed:11827531), however in other crystal structures (Aquifex aeolicus and Thermotoga maritima) the conserved equivalent residue does not bind Zn. Instead it makes a hydrogen bond with the side chain of the first catalytic Zn-binding residue and indirectly stabilizes the Zn.</text>
</comment>
<comment type="sequence caution" evidence="16">
    <conflict type="erroneous initiation">
        <sequence resource="EMBL-CDS" id="AAA97508"/>
    </conflict>
    <text>Extended N-terminus.</text>
</comment>
<dbReference type="EC" id="3.4.24.-" evidence="1"/>
<dbReference type="EMBL" id="M83138">
    <property type="protein sequence ID" value="AAA23813.1"/>
    <property type="molecule type" value="Genomic_DNA"/>
</dbReference>
<dbReference type="EMBL" id="U01376">
    <property type="protein sequence ID" value="AAA97508.1"/>
    <property type="status" value="ALT_INIT"/>
    <property type="molecule type" value="Genomic_DNA"/>
</dbReference>
<dbReference type="EMBL" id="U18997">
    <property type="protein sequence ID" value="AAA57979.1"/>
    <property type="molecule type" value="Genomic_DNA"/>
</dbReference>
<dbReference type="EMBL" id="U00096">
    <property type="protein sequence ID" value="AAC76210.1"/>
    <property type="molecule type" value="Genomic_DNA"/>
</dbReference>
<dbReference type="EMBL" id="AP009048">
    <property type="protein sequence ID" value="BAE77222.1"/>
    <property type="molecule type" value="Genomic_DNA"/>
</dbReference>
<dbReference type="PIR" id="S35109">
    <property type="entry name" value="S35109"/>
</dbReference>
<dbReference type="RefSeq" id="NP_417645.1">
    <property type="nucleotide sequence ID" value="NC_000913.3"/>
</dbReference>
<dbReference type="RefSeq" id="WP_001107467.1">
    <property type="nucleotide sequence ID" value="NZ_STEB01000012.1"/>
</dbReference>
<dbReference type="PDB" id="1LV7">
    <property type="method" value="X-ray"/>
    <property type="resolution" value="1.50 A"/>
    <property type="chains" value="A=141-395"/>
</dbReference>
<dbReference type="PDB" id="4V0B">
    <property type="method" value="X-ray"/>
    <property type="resolution" value="2.55 A"/>
    <property type="chains" value="A/B/C=25-96"/>
</dbReference>
<dbReference type="PDB" id="7VHP">
    <property type="method" value="EM"/>
    <property type="resolution" value="3.27 A"/>
    <property type="chains" value="A/B/C/D/J/K/L/M/T/V/W/X/Y/Z/a/b/c/d/e/f/s/t/u/v=1-644"/>
</dbReference>
<dbReference type="PDB" id="7VHQ">
    <property type="method" value="EM"/>
    <property type="resolution" value="3.27 A"/>
    <property type="chains" value="A/B/C/D/e/f=30-92"/>
</dbReference>
<dbReference type="PDB" id="7WI3">
    <property type="method" value="EM"/>
    <property type="resolution" value="4.00 A"/>
    <property type="chains" value="E/H/I/J/K/L/Q/T/U/V/W/X/g/h/m/n/o/p/q/r/s/t/u/v=1-644"/>
</dbReference>
<dbReference type="PDB" id="7WI4">
    <property type="method" value="EM"/>
    <property type="resolution" value="3.40 A"/>
    <property type="chains" value="A/B/C/D/E/F=1-644"/>
</dbReference>
<dbReference type="PDB" id="9CZ2">
    <property type="method" value="EM"/>
    <property type="resolution" value="4.40 A"/>
    <property type="chains" value="A/B/C/D/E/F/G/H/I/J/K/L=1-644"/>
</dbReference>
<dbReference type="PDBsum" id="1LV7"/>
<dbReference type="PDBsum" id="4V0B"/>
<dbReference type="PDBsum" id="7VHP"/>
<dbReference type="PDBsum" id="7VHQ"/>
<dbReference type="PDBsum" id="7WI3"/>
<dbReference type="PDBsum" id="7WI4"/>
<dbReference type="PDBsum" id="9CZ2"/>
<dbReference type="EMDB" id="EMD-32520"/>
<dbReference type="EMDB" id="EMD-32521"/>
<dbReference type="SMR" id="P0AAI3"/>
<dbReference type="BioGRID" id="4262980">
    <property type="interactions" value="398"/>
</dbReference>
<dbReference type="ComplexPortal" id="CPX-5046">
    <property type="entry name" value="FtsH-HflKC complex"/>
</dbReference>
<dbReference type="DIP" id="DIP-35828N"/>
<dbReference type="FunCoup" id="P0AAI3">
    <property type="interactions" value="846"/>
</dbReference>
<dbReference type="IntAct" id="P0AAI3">
    <property type="interactions" value="30"/>
</dbReference>
<dbReference type="MINT" id="P0AAI3"/>
<dbReference type="STRING" id="511145.b3178"/>
<dbReference type="MEROPS" id="M41.001"/>
<dbReference type="TCDB" id="3.A.29.1.5">
    <property type="family name" value="the mitochondrial inner membrane i-aaa protease complex (mimp) family"/>
</dbReference>
<dbReference type="jPOST" id="P0AAI3"/>
<dbReference type="PaxDb" id="511145-b3178"/>
<dbReference type="EnsemblBacteria" id="AAC76210">
    <property type="protein sequence ID" value="AAC76210"/>
    <property type="gene ID" value="b3178"/>
</dbReference>
<dbReference type="GeneID" id="93778803"/>
<dbReference type="GeneID" id="947690"/>
<dbReference type="KEGG" id="ecj:JW3145"/>
<dbReference type="KEGG" id="eco:b3178"/>
<dbReference type="KEGG" id="ecoc:C3026_17305"/>
<dbReference type="PATRIC" id="fig|511145.12.peg.3271"/>
<dbReference type="EchoBASE" id="EB1469"/>
<dbReference type="eggNOG" id="COG0465">
    <property type="taxonomic scope" value="Bacteria"/>
</dbReference>
<dbReference type="HOGENOM" id="CLU_000688_16_2_6"/>
<dbReference type="InParanoid" id="P0AAI3"/>
<dbReference type="OMA" id="LFLMNQM"/>
<dbReference type="OrthoDB" id="9809379at2"/>
<dbReference type="PhylomeDB" id="P0AAI3"/>
<dbReference type="BioCyc" id="EcoCyc:EG11506-MONOMER"/>
<dbReference type="BioCyc" id="MetaCyc:EG11506-MONOMER"/>
<dbReference type="BRENDA" id="3.4.24.B17">
    <property type="organism ID" value="2026"/>
</dbReference>
<dbReference type="BRENDA" id="3.4.24.B20">
    <property type="organism ID" value="2026"/>
</dbReference>
<dbReference type="SABIO-RK" id="P0AAI3"/>
<dbReference type="EvolutionaryTrace" id="P0AAI3"/>
<dbReference type="PRO" id="PR:P0AAI3"/>
<dbReference type="Proteomes" id="UP000000625">
    <property type="component" value="Chromosome"/>
</dbReference>
<dbReference type="GO" id="GO:0098796">
    <property type="term" value="C:membrane protein complex"/>
    <property type="evidence" value="ECO:0000353"/>
    <property type="project" value="EcoCyc"/>
</dbReference>
<dbReference type="GO" id="GO:0005886">
    <property type="term" value="C:plasma membrane"/>
    <property type="evidence" value="ECO:0000255"/>
    <property type="project" value="EcoCyc"/>
</dbReference>
<dbReference type="GO" id="GO:0098797">
    <property type="term" value="C:plasma membrane protein complex"/>
    <property type="evidence" value="ECO:0000353"/>
    <property type="project" value="ComplexPortal"/>
</dbReference>
<dbReference type="GO" id="GO:0005524">
    <property type="term" value="F:ATP binding"/>
    <property type="evidence" value="ECO:0000255"/>
    <property type="project" value="EcoCyc"/>
</dbReference>
<dbReference type="GO" id="GO:0016887">
    <property type="term" value="F:ATP hydrolysis activity"/>
    <property type="evidence" value="ECO:0007669"/>
    <property type="project" value="UniProtKB-UniRule"/>
</dbReference>
<dbReference type="GO" id="GO:0004176">
    <property type="term" value="F:ATP-dependent peptidase activity"/>
    <property type="evidence" value="ECO:0000314"/>
    <property type="project" value="EcoCyc"/>
</dbReference>
<dbReference type="GO" id="GO:0004222">
    <property type="term" value="F:metalloendopeptidase activity"/>
    <property type="evidence" value="ECO:0000314"/>
    <property type="project" value="EcoCyc"/>
</dbReference>
<dbReference type="GO" id="GO:0008270">
    <property type="term" value="F:zinc ion binding"/>
    <property type="evidence" value="ECO:0000314"/>
    <property type="project" value="EcoCyc"/>
</dbReference>
<dbReference type="GO" id="GO:0030163">
    <property type="term" value="P:protein catabolic process"/>
    <property type="evidence" value="ECO:0000318"/>
    <property type="project" value="GO_Central"/>
</dbReference>
<dbReference type="GO" id="GO:0006508">
    <property type="term" value="P:proteolysis"/>
    <property type="evidence" value="ECO:0000314"/>
    <property type="project" value="EcoCyc"/>
</dbReference>
<dbReference type="CDD" id="cd19501">
    <property type="entry name" value="RecA-like_FtsH"/>
    <property type="match status" value="1"/>
</dbReference>
<dbReference type="FunFam" id="1.10.8.60:FF:000001">
    <property type="entry name" value="ATP-dependent zinc metalloprotease FtsH"/>
    <property type="match status" value="1"/>
</dbReference>
<dbReference type="FunFam" id="1.20.58.760:FF:000001">
    <property type="entry name" value="ATP-dependent zinc metalloprotease FtsH"/>
    <property type="match status" value="1"/>
</dbReference>
<dbReference type="FunFam" id="3.30.720.210:FF:000001">
    <property type="entry name" value="ATP-dependent zinc metalloprotease FtsH"/>
    <property type="match status" value="1"/>
</dbReference>
<dbReference type="FunFam" id="3.40.50.300:FF:000001">
    <property type="entry name" value="ATP-dependent zinc metalloprotease FtsH"/>
    <property type="match status" value="1"/>
</dbReference>
<dbReference type="Gene3D" id="1.10.8.60">
    <property type="match status" value="1"/>
</dbReference>
<dbReference type="Gene3D" id="3.30.720.210">
    <property type="match status" value="1"/>
</dbReference>
<dbReference type="Gene3D" id="3.40.50.300">
    <property type="entry name" value="P-loop containing nucleotide triphosphate hydrolases"/>
    <property type="match status" value="1"/>
</dbReference>
<dbReference type="Gene3D" id="1.20.58.760">
    <property type="entry name" value="Peptidase M41"/>
    <property type="match status" value="1"/>
</dbReference>
<dbReference type="HAMAP" id="MF_01458">
    <property type="entry name" value="FtsH"/>
    <property type="match status" value="1"/>
</dbReference>
<dbReference type="InterPro" id="IPR003593">
    <property type="entry name" value="AAA+_ATPase"/>
</dbReference>
<dbReference type="InterPro" id="IPR041569">
    <property type="entry name" value="AAA_lid_3"/>
</dbReference>
<dbReference type="InterPro" id="IPR003959">
    <property type="entry name" value="ATPase_AAA_core"/>
</dbReference>
<dbReference type="InterPro" id="IPR003960">
    <property type="entry name" value="ATPase_AAA_CS"/>
</dbReference>
<dbReference type="InterPro" id="IPR005936">
    <property type="entry name" value="FtsH"/>
</dbReference>
<dbReference type="InterPro" id="IPR027417">
    <property type="entry name" value="P-loop_NTPase"/>
</dbReference>
<dbReference type="InterPro" id="IPR011546">
    <property type="entry name" value="Pept_M41_FtsH_extracell"/>
</dbReference>
<dbReference type="InterPro" id="IPR000642">
    <property type="entry name" value="Peptidase_M41"/>
</dbReference>
<dbReference type="InterPro" id="IPR037219">
    <property type="entry name" value="Peptidase_M41-like"/>
</dbReference>
<dbReference type="NCBIfam" id="TIGR01241">
    <property type="entry name" value="FtsH_fam"/>
    <property type="match status" value="1"/>
</dbReference>
<dbReference type="NCBIfam" id="NF008004">
    <property type="entry name" value="PRK10733.1"/>
    <property type="match status" value="1"/>
</dbReference>
<dbReference type="PANTHER" id="PTHR23076:SF97">
    <property type="entry name" value="ATP-DEPENDENT ZINC METALLOPROTEASE YME1L1"/>
    <property type="match status" value="1"/>
</dbReference>
<dbReference type="PANTHER" id="PTHR23076">
    <property type="entry name" value="METALLOPROTEASE M41 FTSH"/>
    <property type="match status" value="1"/>
</dbReference>
<dbReference type="Pfam" id="PF00004">
    <property type="entry name" value="AAA"/>
    <property type="match status" value="1"/>
</dbReference>
<dbReference type="Pfam" id="PF17862">
    <property type="entry name" value="AAA_lid_3"/>
    <property type="match status" value="1"/>
</dbReference>
<dbReference type="Pfam" id="PF06480">
    <property type="entry name" value="FtsH_ext"/>
    <property type="match status" value="1"/>
</dbReference>
<dbReference type="Pfam" id="PF01434">
    <property type="entry name" value="Peptidase_M41"/>
    <property type="match status" value="1"/>
</dbReference>
<dbReference type="SMART" id="SM00382">
    <property type="entry name" value="AAA"/>
    <property type="match status" value="1"/>
</dbReference>
<dbReference type="SUPFAM" id="SSF140990">
    <property type="entry name" value="FtsH protease domain-like"/>
    <property type="match status" value="1"/>
</dbReference>
<dbReference type="SUPFAM" id="SSF52540">
    <property type="entry name" value="P-loop containing nucleoside triphosphate hydrolases"/>
    <property type="match status" value="1"/>
</dbReference>
<dbReference type="PROSITE" id="PS00674">
    <property type="entry name" value="AAA"/>
    <property type="match status" value="1"/>
</dbReference>
<reference key="1">
    <citation type="journal article" date="1993" name="J. Bacteriol.">
        <title>The Escherichia coli FtsH protein is a prokaryotic member of a protein family of putative ATPases involved in membrane functions, cell cycle control, and gene expression.</title>
        <authorList>
            <person name="Tomoyasu T."/>
            <person name="Yuki T."/>
            <person name="Morimura S."/>
            <person name="Mori H."/>
            <person name="Yamanaka K."/>
            <person name="Niki H."/>
            <person name="Hiraga S."/>
            <person name="Ogura T."/>
        </authorList>
    </citation>
    <scope>NUCLEOTIDE SEQUENCE [GENOMIC DNA]</scope>
    <scope>MUTAGENESIS OF GLU-463 AND HIS-536</scope>
    <source>
        <strain>K12 / W3110 / ATCC 27325 / DSM 5911</strain>
    </source>
</reference>
<reference key="2">
    <citation type="submission" date="1993-09" db="EMBL/GenBank/DDBJ databases">
        <title>Identification and physical analysis of new genes in the argG region (69 min) of Escherichia coli chromosome.</title>
        <authorList>
            <person name="Wang R."/>
            <person name="Kushner S.R."/>
        </authorList>
    </citation>
    <scope>NUCLEOTIDE SEQUENCE [GENOMIC DNA]</scope>
    <source>
        <strain>K12</strain>
    </source>
</reference>
<reference key="3">
    <citation type="journal article" date="1997" name="Science">
        <title>The complete genome sequence of Escherichia coli K-12.</title>
        <authorList>
            <person name="Blattner F.R."/>
            <person name="Plunkett G. III"/>
            <person name="Bloch C.A."/>
            <person name="Perna N.T."/>
            <person name="Burland V."/>
            <person name="Riley M."/>
            <person name="Collado-Vides J."/>
            <person name="Glasner J.D."/>
            <person name="Rode C.K."/>
            <person name="Mayhew G.F."/>
            <person name="Gregor J."/>
            <person name="Davis N.W."/>
            <person name="Kirkpatrick H.A."/>
            <person name="Goeden M.A."/>
            <person name="Rose D.J."/>
            <person name="Mau B."/>
            <person name="Shao Y."/>
        </authorList>
    </citation>
    <scope>NUCLEOTIDE SEQUENCE [LARGE SCALE GENOMIC DNA]</scope>
    <source>
        <strain>K12 / MG1655 / ATCC 47076</strain>
    </source>
</reference>
<reference key="4">
    <citation type="journal article" date="2006" name="Mol. Syst. Biol.">
        <title>Highly accurate genome sequences of Escherichia coli K-12 strains MG1655 and W3110.</title>
        <authorList>
            <person name="Hayashi K."/>
            <person name="Morooka N."/>
            <person name="Yamamoto Y."/>
            <person name="Fujita K."/>
            <person name="Isono K."/>
            <person name="Choi S."/>
            <person name="Ohtsubo E."/>
            <person name="Baba T."/>
            <person name="Wanner B.L."/>
            <person name="Mori H."/>
            <person name="Horiuchi T."/>
        </authorList>
    </citation>
    <scope>NUCLEOTIDE SEQUENCE [LARGE SCALE GENOMIC DNA]</scope>
    <source>
        <strain>K12 / W3110 / ATCC 27325 / DSM 5911</strain>
    </source>
</reference>
<reference key="5">
    <citation type="journal article" date="1993" name="J. Bacteriol.">
        <title>Topology and subcellular localization of FtsH protein in Escherichia coli.</title>
        <authorList>
            <person name="Tomoyasu T."/>
            <person name="Yamanaka K."/>
            <person name="Murata K."/>
            <person name="Suzaki T."/>
            <person name="Bouloc P."/>
            <person name="Kato A."/>
            <person name="Niki H."/>
            <person name="Hiraga S."/>
            <person name="Ogura T."/>
        </authorList>
    </citation>
    <scope>SUBCELLULAR LOCATION</scope>
    <scope>TOPOLOGY</scope>
    <source>
        <strain>K12 / W3110 / ATCC 27325 / DSM 5911</strain>
    </source>
</reference>
<reference key="6">
    <citation type="journal article" date="1991" name="Res. Microbiol.">
        <title>Structure and function of the ftsH gene in Escherichia coli.</title>
        <authorList>
            <person name="Ogura T."/>
            <person name="Tomoyasu T."/>
            <person name="Yuki T."/>
            <person name="Morimura S."/>
            <person name="Begg K.J."/>
            <person name="Donachie W.D."/>
            <person name="Mori H."/>
            <person name="Niki H."/>
            <person name="Hiraga S."/>
        </authorList>
    </citation>
    <scope>DISCUSSION OF SEQUENCE</scope>
</reference>
<reference key="7">
    <citation type="journal article" date="1993" name="Proc. Natl. Acad. Sci. U.S.A.">
        <title>Cell growth and lambda phage development controlled by the same essential Escherichia coli gene, ftsH/hflB.</title>
        <authorList>
            <person name="Herman C."/>
            <person name="Ogura T."/>
            <person name="Tomoyasu T."/>
            <person name="Hiraga S."/>
            <person name="Akiyama Y."/>
            <person name="Ito K."/>
            <person name="Thomas R."/>
            <person name="D'Ari R."/>
            <person name="Bouloc P."/>
        </authorList>
    </citation>
    <scope>IDENTIFICATION OF HFLB AS FTSH</scope>
</reference>
<reference key="8">
    <citation type="journal article" date="1994" name="J. Biol. Chem.">
        <title>Involvement of FtsH in protein assembly into and through the membrane. II. Dominant mutations affecting FtsH functions.</title>
        <authorList>
            <person name="Akiyama Y."/>
            <person name="Shirai Y."/>
            <person name="Ito K."/>
        </authorList>
    </citation>
    <scope>CHARACTERIZATION</scope>
</reference>
<reference key="9">
    <citation type="journal article" date="1995" name="EMBO J.">
        <title>Escherichia coli FtsH is a membrane-bound, ATP-dependent protease which degrades the heat-shock transcription factor sigma 32.</title>
        <authorList>
            <person name="Tomoyasu T."/>
            <person name="Gamer J."/>
            <person name="Bukau B."/>
            <person name="Kanemori M."/>
            <person name="Mori H."/>
            <person name="Rutman A.J."/>
            <person name="Oppenheim A.B."/>
            <person name="Yura T."/>
            <person name="Yamanaka K."/>
            <person name="Niki H."/>
            <person name="Hiraga S."/>
            <person name="Ogura T."/>
        </authorList>
    </citation>
    <scope>FUNCTION</scope>
    <scope>SIGMA-32 AS SUBSTRATE</scope>
</reference>
<reference key="10">
    <citation type="journal article" date="1995" name="Proc. Natl. Acad. Sci. U.S.A.">
        <title>FtsH is required for proteolytic elimination of uncomplexed forms of SecY, an essential protein translocase subunit.</title>
        <authorList>
            <person name="Kihara A."/>
            <person name="Akiyama Y."/>
            <person name="Ito K."/>
        </authorList>
    </citation>
    <scope>FUNCTION</scope>
    <scope>SECY AS SUBSTRATE</scope>
</reference>
<reference key="11">
    <citation type="journal article" date="1996" name="EMBO J.">
        <title>A protease complex in the Escherichia coli plasma membrane: HflKC (HflA) forms a complex with FtsH (HflB), regulating its proteolytic activity against SecY.</title>
        <authorList>
            <person name="Kihara A."/>
            <person name="Akiyama Y."/>
            <person name="Ito K."/>
        </authorList>
    </citation>
    <scope>INTERACTION WITH HFLC AND HFLK</scope>
    <scope>SUBCELLULAR LOCATION</scope>
    <source>
        <strain>K12 / CSH26 / AD16</strain>
    </source>
</reference>
<reference key="12">
    <citation type="journal article" date="1997" name="Proc. Natl. Acad. Sci. U.S.A.">
        <title>Host regulation of lysogenic decision in bacteriophage lambda: transmembrane modulation of FtsH (HflB), the cII degrading protease, by HflKC (HflA).</title>
        <authorList>
            <person name="Kihara A."/>
            <person name="Akiyama Y."/>
            <person name="Ito K."/>
        </authorList>
    </citation>
    <scope>ACTIVITY REGULATION (MICROBIAL INFECTION)</scope>
    <scope>INTERACTION WITH HFLKC</scope>
    <source>
        <strain>K12 / CSH26 / AD16</strain>
    </source>
</reference>
<reference key="13">
    <citation type="journal article" date="1998" name="Genes Dev.">
        <title>Degradation of carboxy-terminal-tagged cytoplasmic proteins by the Escherichia coli protease HflB (FtsH).</title>
        <authorList>
            <person name="Herman C."/>
            <person name="Thevenet D."/>
            <person name="Bouloc P."/>
            <person name="Walker G.C."/>
            <person name="D'Ari R."/>
        </authorList>
    </citation>
    <scope>CHARACTERIZATION</scope>
</reference>
<reference key="14">
    <citation type="journal article" date="1998" name="J. Mol. Biol.">
        <title>Different pathways for protein degradation by the FtsH/HflKC membrane-embedded protease complex: an implication from the interference by a mutant form of a new substrate protein, YccA.</title>
        <authorList>
            <person name="Kihara A."/>
            <person name="Akiyama Y."/>
            <person name="Ito K."/>
        </authorList>
    </citation>
    <scope>MEMBRANE SUBSTRATES</scope>
    <scope>INTERACTION WITH YCCA</scope>
    <source>
        <strain>K12 / CSH26 / AD16</strain>
    </source>
</reference>
<reference key="15">
    <citation type="journal article" date="1999" name="EMBO J.">
        <title>Dislocation of membrane proteins in FtsH-mediated proteolysis.</title>
        <authorList>
            <person name="Kihara A."/>
            <person name="Akiyama Y."/>
            <person name="Ito K."/>
        </authorList>
    </citation>
    <scope>MECHANISM OF MEMBRANE SUBSTRATE RECOGNITION</scope>
    <source>
        <strain>K12 / CSH26 / AD16</strain>
    </source>
</reference>
<reference key="16">
    <citation type="journal article" date="1999" name="J. Biol. Chem.">
        <title>Dissecting the role of a conserved motif (the second region of homology) in the AAA family of ATPases. Site-directed mutagenesis of the ATP-dependent protease FtsH.</title>
        <authorList>
            <person name="Karata K."/>
            <person name="Inagawa T."/>
            <person name="Wilkinson A.J."/>
            <person name="Tatsuta T."/>
            <person name="Ogura T."/>
        </authorList>
    </citation>
    <scope>MUTAGENESIS OF LEU-201; THR-297; ASN-298; ASP-304; LEU-307; ARG-309; ARG-312; GLU-415 AND HIS-418</scope>
</reference>
<reference key="17">
    <citation type="journal article" date="1999" name="Mol. Microbiol.">
        <title>Balanced biosynthesis of major membrane components through regulated degradation of the committed enzyme of lipid A biosynthesis by the AAA protease FtsH (HflB) in Escherichia coli.</title>
        <authorList>
            <person name="Ogura T."/>
            <person name="Inoue K."/>
            <person name="Tatsuta T."/>
            <person name="Suzaki T."/>
            <person name="Karata K."/>
            <person name="Young K."/>
            <person name="Su L.H."/>
            <person name="Fierke C.A."/>
            <person name="Jackman J.E."/>
            <person name="Raetz C.R."/>
            <person name="Coleman J."/>
            <person name="Tomoyasu T."/>
            <person name="Matsuzawa H."/>
        </authorList>
    </citation>
    <scope>LPXC AS SUBSTRATE</scope>
    <scope>FUNCTION IN REGULATING LIPOPOLYSACCHARIDE SYNTHESIS</scope>
    <scope>DISRUPTION PHENOTYPE</scope>
    <source>
        <strain>K12 / W3110</strain>
        <strain>W2252</strain>
    </source>
</reference>
<reference key="18">
    <citation type="journal article" date="2000" name="EMBO Rep.">
        <title>Length recognition at the N-terminal tail for the initiation of FtsH-mediated proteolysis.</title>
        <authorList>
            <person name="Chiba S."/>
            <person name="Akiyama Y."/>
            <person name="Mori H."/>
            <person name="Matsuo E."/>
            <person name="Ito K."/>
        </authorList>
    </citation>
    <scope>RECOGNITION OF MEMBRANE SUBSTRATE FROM N-TERMINUS</scope>
</reference>
<reference key="19">
    <citation type="journal article" date="2002" name="Biochemistry">
        <title>Identification of glutamic acid 479 as the gluzincin coordinator of zinc in FtsH (HflB).</title>
        <authorList>
            <person name="Saikawa N."/>
            <person name="Ito K."/>
            <person name="Akiyama Y."/>
        </authorList>
    </citation>
    <scope>ZINC-BINDING</scope>
    <scope>MUTAGENESIS OF HIS-414; HIS-418; GLU-476 AND GLU-582</scope>
    <source>
        <strain>K12</strain>
    </source>
</reference>
<reference key="20">
    <citation type="journal article" date="2002" name="J. Bacteriol.">
        <title>Membrane protein degradation by FtsH can be initiated from either end.</title>
        <authorList>
            <person name="Chiba S."/>
            <person name="Akiyama Y."/>
            <person name="Ito K."/>
        </authorList>
    </citation>
    <scope>RECOGNITION OF MEMBRANE SUBSTRATE FROM C-TERMINUS</scope>
    <source>
        <strain>K12 / JM103</strain>
    </source>
</reference>
<reference key="21">
    <citation type="journal article" date="2003" name="J. Biol. Chem.">
        <title>Conserved pore residues in the AAA protease FtsH are important for proteolysis and its coupling to ATP hydrolysis.</title>
        <authorList>
            <person name="Yamada-Inagawa T."/>
            <person name="Okuno T."/>
            <person name="Karata K."/>
            <person name="Yamanaka K."/>
            <person name="Ogura T."/>
        </authorList>
    </citation>
    <scope>REQUIREMENT FOR ATP</scope>
    <scope>MUTAGENESIS OF PHE-225 AND GLY-227</scope>
</reference>
<reference key="22">
    <citation type="journal article" date="2005" name="Science">
        <title>Global topology analysis of the Escherichia coli inner membrane proteome.</title>
        <authorList>
            <person name="Daley D.O."/>
            <person name="Rapp M."/>
            <person name="Granseth E."/>
            <person name="Melen K."/>
            <person name="Drew D."/>
            <person name="von Heijne G."/>
        </authorList>
    </citation>
    <scope>TOPOLOGY [LARGE SCALE ANALYSIS]</scope>
    <scope>SUBCELLULAR LOCATION</scope>
    <source>
        <strain>K12 / MG1655 / ATCC 47076</strain>
    </source>
</reference>
<reference key="23">
    <citation type="journal article" date="2006" name="Mol. Microbiol.">
        <title>The Escherichia coli plasma membrane contains two PHB (prohibitin homology) domain protein complexes of opposite orientations.</title>
        <authorList>
            <person name="Chiba S."/>
            <person name="Ito K."/>
            <person name="Akiyama Y."/>
        </authorList>
    </citation>
    <scope>POSSIBLE INTERACTION WITH QMCA</scope>
    <source>
        <strain>K12</strain>
    </source>
</reference>
<reference key="24">
    <citation type="journal article" date="2008" name="FEBS Lett.">
        <title>Detection of cross-links between FtsH, YidC, HflK/C suggests a linked role for these proteins in quality control upon insertion of bacterial inner membrane proteins.</title>
        <authorList>
            <person name="van Bloois E."/>
            <person name="Dekker H.L."/>
            <person name="Froderberg L."/>
            <person name="Houben E.N."/>
            <person name="Urbanus M.L."/>
            <person name="de Koster C.G."/>
            <person name="de Gier J.W."/>
            <person name="Luirink J."/>
        </authorList>
    </citation>
    <scope>INTERACTION WITH YIDC (OXAA)</scope>
</reference>
<reference key="25">
    <citation type="journal article" date="2008" name="J. Bacteriol.">
        <title>Dual role of FtsH in regulating lipopolysaccharide biosynthesis in Escherichia coli.</title>
        <authorList>
            <person name="Katz C."/>
            <person name="Ron E.Z."/>
        </authorList>
    </citation>
    <scope>KDO TRANSFERASE (KDTA) AS SUBSTRATE</scope>
    <scope>FUNCTION IN REGULATING LIPOPOLYSACCHARIDE BIOSYNTHESIS</scope>
    <source>
        <strain>K12 / MG1655 / ATCC 47076</strain>
    </source>
</reference>
<reference key="26">
    <citation type="journal article" date="2015" name="Proc. Natl. Acad. Sci. U.S.A.">
        <title>Contact-dependent growth inhibition toxins exploit multiple independent cell-entry pathways.</title>
        <authorList>
            <person name="Willett J.L."/>
            <person name="Gucinski G.C."/>
            <person name="Fatherree J.P."/>
            <person name="Low D.A."/>
            <person name="Hayes C.S."/>
        </authorList>
    </citation>
    <scope>RECEPTOR FOR CDI TOXIN ENTRY INTO TARGET CELL CYTOPLASM (MICROBIAL INFECTION)</scope>
    <scope>DISRUPTION PHENOTYPE</scope>
    <source>
        <strain>K12 / MC4100 / ATCC 35695 / DSM 6574</strain>
    </source>
</reference>
<reference key="27">
    <citation type="journal article" date="2002" name="Acta Crystallogr. D">
        <title>Crystallization of the AAA domain of the ATP-dependent protease FtsH of Escherichia coli.</title>
        <authorList>
            <person name="Krzywda S."/>
            <person name="Brzozowski A.M."/>
            <person name="Karata K."/>
            <person name="Ogura T."/>
            <person name="Wilkinson A.J."/>
        </authorList>
    </citation>
    <scope>PRELIMINARY CRYSTALLIZATION</scope>
</reference>
<reference key="28">
    <citation type="journal article" date="2002" name="Structure">
        <title>The crystal structure of the AAA domain of the ATP-dependent protease FtsH of Escherichia coli at 1.5 A resolution.</title>
        <authorList>
            <person name="Krzywda S."/>
            <person name="Brzozowski A.M."/>
            <person name="Verma C."/>
            <person name="Karata K."/>
            <person name="Ogura T."/>
            <person name="Wilkinson A.J."/>
        </authorList>
    </citation>
    <scope>X-RAY CRYSTALLOGRAPHY (1.5 ANGSTROMS) OF 141-395</scope>
</reference>
<reference key="29">
    <citation type="journal article" date="2009" name="J. Biochem.">
        <title>Quality control of cytoplasmic membrane proteins in Escherichia coli.</title>
        <authorList>
            <person name="Akiyama Y."/>
        </authorList>
    </citation>
    <scope>REVIEW</scope>
</reference>
<reference key="30">
    <citation type="journal article" date="2009" name="Res. Microbiol.">
        <title>Degradation of cytoplasmic substrates by FtsH, a membrane-anchored protease with many talents.</title>
        <authorList>
            <person name="Narberhaus F."/>
            <person name="Obrist M."/>
            <person name="Fuhrer F."/>
            <person name="Langklotz S."/>
        </authorList>
    </citation>
    <scope>REVIEW</scope>
</reference>
<organism>
    <name type="scientific">Escherichia coli (strain K12)</name>
    <dbReference type="NCBI Taxonomy" id="83333"/>
    <lineage>
        <taxon>Bacteria</taxon>
        <taxon>Pseudomonadati</taxon>
        <taxon>Pseudomonadota</taxon>
        <taxon>Gammaproteobacteria</taxon>
        <taxon>Enterobacterales</taxon>
        <taxon>Enterobacteriaceae</taxon>
        <taxon>Escherichia</taxon>
    </lineage>
</organism>
<name>FTSH_ECOLI</name>
<evidence type="ECO:0000255" key="1">
    <source>
        <dbReference type="HAMAP-Rule" id="MF_01458"/>
    </source>
</evidence>
<evidence type="ECO:0000256" key="2">
    <source>
        <dbReference type="SAM" id="MobiDB-lite"/>
    </source>
</evidence>
<evidence type="ECO:0000269" key="3">
    <source>
    </source>
</evidence>
<evidence type="ECO:0000269" key="4">
    <source>
    </source>
</evidence>
<evidence type="ECO:0000269" key="5">
    <source>
    </source>
</evidence>
<evidence type="ECO:0000269" key="6">
    <source>
    </source>
</evidence>
<evidence type="ECO:0000269" key="7">
    <source>
    </source>
</evidence>
<evidence type="ECO:0000269" key="8">
    <source>
    </source>
</evidence>
<evidence type="ECO:0000269" key="9">
    <source>
    </source>
</evidence>
<evidence type="ECO:0000269" key="10">
    <source>
    </source>
</evidence>
<evidence type="ECO:0000269" key="11">
    <source>
    </source>
</evidence>
<evidence type="ECO:0000269" key="12">
    <source>
    </source>
</evidence>
<evidence type="ECO:0000269" key="13">
    <source>
    </source>
</evidence>
<evidence type="ECO:0000269" key="14">
    <source>
    </source>
</evidence>
<evidence type="ECO:0000269" key="15">
    <source>
    </source>
</evidence>
<evidence type="ECO:0000305" key="16"/>
<evidence type="ECO:0000305" key="17">
    <source>
    </source>
</evidence>
<evidence type="ECO:0000305" key="18">
    <source>
    </source>
</evidence>
<evidence type="ECO:0000305" key="19">
    <source>
    </source>
</evidence>
<evidence type="ECO:0007829" key="20">
    <source>
        <dbReference type="PDB" id="1LV7"/>
    </source>
</evidence>
<evidence type="ECO:0007829" key="21">
    <source>
        <dbReference type="PDB" id="4V0B"/>
    </source>
</evidence>
<evidence type="ECO:0007829" key="22">
    <source>
        <dbReference type="PDB" id="7WI4"/>
    </source>
</evidence>